<gene>
    <name evidence="1" type="primary">groEL</name>
    <name evidence="1" type="synonym">groL</name>
</gene>
<evidence type="ECO:0000255" key="1">
    <source>
        <dbReference type="HAMAP-Rule" id="MF_00600"/>
    </source>
</evidence>
<sequence length="526" mass="56643">MSKRILYQEQARRALSQGMDILAEAVAVTLGPKGRNVVLEKKYSCPQIVNDGVTIAKEIDLANHMQNTGVCLIRQAASKTNEVAGDGTTTATVLAHAMIKQGLKYVASGANPMALKTGMSLATQWLVSQIRDLAQPISDHLAIKQVASLSAGNDDQVGEMISQAFEQVGADGVISLEEGKSSQTQLQITQGMRFEKGYISPYFATAGDTVVLDQPYILLTDKKITLVKQDLLPVLTLVSRTNRALLIIADDVEKEALATLILNKLRGIIQVVAVRAPGFGDRKKALLEDMAVLTGGQVITQEAGLSLETITLDLLGEARRIEVGKSYTTIVADSNKQQVKARCEQIKQQWARSDSSYEKQQLQERLAKLSSGVAVIQVGGATEAEMKDKKLRLDDAINATRAAIEEGIVAGGGSTLVHFIKPLIEWSHHLKPEEQLGAQIVAKALSAPLHRIATNAGQNGSLIVEQVQNQPNLGYDAANHRFVNMIEAGIIDPAKVTRCALQNATSIAAMVLTTECMIVDKPSGDK</sequence>
<keyword id="KW-0067">ATP-binding</keyword>
<keyword id="KW-0143">Chaperone</keyword>
<keyword id="KW-0150">Chloroplast</keyword>
<keyword id="KW-0413">Isomerase</keyword>
<keyword id="KW-0547">Nucleotide-binding</keyword>
<keyword id="KW-0934">Plastid</keyword>
<keyword id="KW-1185">Reference proteome</keyword>
<organism>
    <name type="scientific">Cyanidioschyzon merolae (strain NIES-3377 / 10D)</name>
    <name type="common">Unicellular red alga</name>
    <dbReference type="NCBI Taxonomy" id="280699"/>
    <lineage>
        <taxon>Eukaryota</taxon>
        <taxon>Rhodophyta</taxon>
        <taxon>Bangiophyceae</taxon>
        <taxon>Cyanidiales</taxon>
        <taxon>Cyanidiaceae</taxon>
        <taxon>Cyanidioschyzon</taxon>
    </lineage>
</organism>
<reference key="1">
    <citation type="journal article" date="2003" name="DNA Res.">
        <title>Complete sequence and analysis of the plastid genome of the unicellular red alga Cyanidioschyzon merolae.</title>
        <authorList>
            <person name="Ohta N."/>
            <person name="Matsuzaki M."/>
            <person name="Misumi O."/>
            <person name="Miyagishima S.-Y."/>
            <person name="Nozaki H."/>
            <person name="Tanaka K."/>
            <person name="Shin-i T."/>
            <person name="Kohara Y."/>
            <person name="Kuroiwa T."/>
        </authorList>
    </citation>
    <scope>NUCLEOTIDE SEQUENCE [LARGE SCALE GENOMIC DNA]</scope>
    <source>
        <strain>NIES-3377 / 10D</strain>
    </source>
</reference>
<name>CH60_CYAM1</name>
<protein>
    <recommendedName>
        <fullName evidence="1">Chaperonin GroEL, chloroplastic</fullName>
        <ecNumber evidence="1">5.6.1.7</ecNumber>
    </recommendedName>
    <alternativeName>
        <fullName evidence="1">60 kDa chaperonin</fullName>
    </alternativeName>
    <alternativeName>
        <fullName evidence="1">Chaperonin-60</fullName>
        <shortName evidence="1">Cpn60</shortName>
    </alternativeName>
</protein>
<comment type="function">
    <text evidence="1">Together with its co-chaperonin GroES, plays an essential role in assisting protein folding. The GroEL-GroES system forms a nano-cage that allows encapsulation of the non-native substrate proteins and provides a physical environment optimized to promote and accelerate protein folding.</text>
</comment>
<comment type="catalytic activity">
    <reaction evidence="1">
        <text>ATP + H2O + a folded polypeptide = ADP + phosphate + an unfolded polypeptide.</text>
        <dbReference type="EC" id="5.6.1.7"/>
    </reaction>
</comment>
<comment type="subunit">
    <text evidence="1">Forms a cylinder of 14 subunits composed of two heptameric rings stacked back-to-back. Interacts with the co-chaperonin GroES.</text>
</comment>
<comment type="subcellular location">
    <subcellularLocation>
        <location evidence="1">Plastid</location>
        <location evidence="1">Chloroplast</location>
    </subcellularLocation>
</comment>
<comment type="similarity">
    <text evidence="1">Belongs to the chaperonin (HSP60) family.</text>
</comment>
<feature type="chain" id="PRO_0000063622" description="Chaperonin GroEL, chloroplastic">
    <location>
        <begin position="1"/>
        <end position="526"/>
    </location>
</feature>
<feature type="binding site" evidence="1">
    <location>
        <begin position="29"/>
        <end position="32"/>
    </location>
    <ligand>
        <name>ATP</name>
        <dbReference type="ChEBI" id="CHEBI:30616"/>
    </ligand>
</feature>
<feature type="binding site" evidence="1">
    <location>
        <begin position="86"/>
        <end position="90"/>
    </location>
    <ligand>
        <name>ATP</name>
        <dbReference type="ChEBI" id="CHEBI:30616"/>
    </ligand>
</feature>
<feature type="binding site" evidence="1">
    <location>
        <position position="412"/>
    </location>
    <ligand>
        <name>ATP</name>
        <dbReference type="ChEBI" id="CHEBI:30616"/>
    </ligand>
</feature>
<feature type="binding site" evidence="1">
    <location>
        <begin position="476"/>
        <end position="478"/>
    </location>
    <ligand>
        <name>ATP</name>
        <dbReference type="ChEBI" id="CHEBI:30616"/>
    </ligand>
</feature>
<feature type="binding site" evidence="1">
    <location>
        <position position="492"/>
    </location>
    <ligand>
        <name>ATP</name>
        <dbReference type="ChEBI" id="CHEBI:30616"/>
    </ligand>
</feature>
<geneLocation type="chloroplast"/>
<accession>Q85G22</accession>
<proteinExistence type="inferred from homology"/>
<dbReference type="EC" id="5.6.1.7" evidence="1"/>
<dbReference type="EMBL" id="AB002583">
    <property type="protein sequence ID" value="BAC76169.1"/>
    <property type="molecule type" value="Genomic_DNA"/>
</dbReference>
<dbReference type="RefSeq" id="NP_849007.1">
    <property type="nucleotide sequence ID" value="NC_004799.1"/>
</dbReference>
<dbReference type="SMR" id="Q85G22"/>
<dbReference type="STRING" id="280699.Q85G22"/>
<dbReference type="EnsemblPlants" id="CMV086CT">
    <property type="protein sequence ID" value="CMV086CT"/>
    <property type="gene ID" value="CMV086C"/>
</dbReference>
<dbReference type="GeneID" id="844891"/>
<dbReference type="Gramene" id="CMV086CT">
    <property type="protein sequence ID" value="CMV086CT"/>
    <property type="gene ID" value="CMV086C"/>
</dbReference>
<dbReference type="KEGG" id="cme:CymeCp075"/>
<dbReference type="eggNOG" id="KOG0356">
    <property type="taxonomic scope" value="Eukaryota"/>
</dbReference>
<dbReference type="HOGENOM" id="CLU_016503_3_0_1"/>
<dbReference type="Proteomes" id="UP000007014">
    <property type="component" value="Chloroplast"/>
</dbReference>
<dbReference type="GO" id="GO:0009507">
    <property type="term" value="C:chloroplast"/>
    <property type="evidence" value="ECO:0007669"/>
    <property type="project" value="UniProtKB-SubCell"/>
</dbReference>
<dbReference type="GO" id="GO:0005524">
    <property type="term" value="F:ATP binding"/>
    <property type="evidence" value="ECO:0007669"/>
    <property type="project" value="UniProtKB-UniRule"/>
</dbReference>
<dbReference type="GO" id="GO:0140662">
    <property type="term" value="F:ATP-dependent protein folding chaperone"/>
    <property type="evidence" value="ECO:0007669"/>
    <property type="project" value="InterPro"/>
</dbReference>
<dbReference type="GO" id="GO:0016853">
    <property type="term" value="F:isomerase activity"/>
    <property type="evidence" value="ECO:0007669"/>
    <property type="project" value="UniProtKB-KW"/>
</dbReference>
<dbReference type="GO" id="GO:0051082">
    <property type="term" value="F:unfolded protein binding"/>
    <property type="evidence" value="ECO:0007669"/>
    <property type="project" value="UniProtKB-UniRule"/>
</dbReference>
<dbReference type="GO" id="GO:0042026">
    <property type="term" value="P:protein refolding"/>
    <property type="evidence" value="ECO:0007669"/>
    <property type="project" value="UniProtKB-UniRule"/>
</dbReference>
<dbReference type="CDD" id="cd03344">
    <property type="entry name" value="GroEL"/>
    <property type="match status" value="1"/>
</dbReference>
<dbReference type="FunFam" id="3.50.7.10:FF:000001">
    <property type="entry name" value="60 kDa chaperonin"/>
    <property type="match status" value="1"/>
</dbReference>
<dbReference type="Gene3D" id="3.50.7.10">
    <property type="entry name" value="GroEL"/>
    <property type="match status" value="1"/>
</dbReference>
<dbReference type="Gene3D" id="1.10.560.10">
    <property type="entry name" value="GroEL-like equatorial domain"/>
    <property type="match status" value="1"/>
</dbReference>
<dbReference type="Gene3D" id="3.30.260.10">
    <property type="entry name" value="TCP-1-like chaperonin intermediate domain"/>
    <property type="match status" value="1"/>
</dbReference>
<dbReference type="HAMAP" id="MF_00600">
    <property type="entry name" value="CH60"/>
    <property type="match status" value="1"/>
</dbReference>
<dbReference type="InterPro" id="IPR018370">
    <property type="entry name" value="Chaperonin_Cpn60_CS"/>
</dbReference>
<dbReference type="InterPro" id="IPR001844">
    <property type="entry name" value="Cpn60/GroEL"/>
</dbReference>
<dbReference type="InterPro" id="IPR002423">
    <property type="entry name" value="Cpn60/GroEL/TCP-1"/>
</dbReference>
<dbReference type="InterPro" id="IPR027409">
    <property type="entry name" value="GroEL-like_apical_dom_sf"/>
</dbReference>
<dbReference type="InterPro" id="IPR027413">
    <property type="entry name" value="GROEL-like_equatorial_sf"/>
</dbReference>
<dbReference type="InterPro" id="IPR027410">
    <property type="entry name" value="TCP-1-like_intermed_sf"/>
</dbReference>
<dbReference type="NCBIfam" id="TIGR02348">
    <property type="entry name" value="GroEL"/>
    <property type="match status" value="1"/>
</dbReference>
<dbReference type="NCBIfam" id="NF000592">
    <property type="entry name" value="PRK00013.1"/>
    <property type="match status" value="1"/>
</dbReference>
<dbReference type="NCBIfam" id="NF009487">
    <property type="entry name" value="PRK12849.1"/>
    <property type="match status" value="1"/>
</dbReference>
<dbReference type="NCBIfam" id="NF009488">
    <property type="entry name" value="PRK12850.1"/>
    <property type="match status" value="1"/>
</dbReference>
<dbReference type="NCBIfam" id="NF009489">
    <property type="entry name" value="PRK12851.1"/>
    <property type="match status" value="1"/>
</dbReference>
<dbReference type="PANTHER" id="PTHR45633">
    <property type="entry name" value="60 KDA HEAT SHOCK PROTEIN, MITOCHONDRIAL"/>
    <property type="match status" value="1"/>
</dbReference>
<dbReference type="Pfam" id="PF00118">
    <property type="entry name" value="Cpn60_TCP1"/>
    <property type="match status" value="1"/>
</dbReference>
<dbReference type="PRINTS" id="PR00298">
    <property type="entry name" value="CHAPERONIN60"/>
</dbReference>
<dbReference type="SUPFAM" id="SSF52029">
    <property type="entry name" value="GroEL apical domain-like"/>
    <property type="match status" value="1"/>
</dbReference>
<dbReference type="SUPFAM" id="SSF48592">
    <property type="entry name" value="GroEL equatorial domain-like"/>
    <property type="match status" value="1"/>
</dbReference>
<dbReference type="SUPFAM" id="SSF54849">
    <property type="entry name" value="GroEL-intermediate domain like"/>
    <property type="match status" value="1"/>
</dbReference>
<dbReference type="PROSITE" id="PS00296">
    <property type="entry name" value="CHAPERONINS_CPN60"/>
    <property type="match status" value="1"/>
</dbReference>